<sequence>MKEKVVLAYSGGLDTSIIIPWLKENYDLDVIAVCVNVGQGDDMDYVKTKAIKSGASKIYVEDVKEEFVVDYLYKAIKSEALYEQDYMLGTSFARPLMAKKLVEIAHKEQAKYICHGCTGKGNDQVRFEVGVKAQDPTIKIIAPWRIWDIKSREDAIDYAKKVGVEVPVTKKKIYSVDKNLWHVSHEGGDLEDLKNEHKEDMYFMVTPPEKAKDEPTYLEIYFEKGAPVKINGEVLNPVDIIDKLNTIGGENGIGIADIIENRLVGMKSRGIYETPAGTLLYAAHKKLESVTLDKYTYQYKKIVSAQYGELVYNGLWFTSLREAIDAFVDKTQENVTGTVQLKLYKGNIKPCSVDTEYALYDEGISSFGESELYSHKDAEGFINLFGLPSKIKALKNF</sequence>
<dbReference type="EC" id="6.3.4.5" evidence="1"/>
<dbReference type="EMBL" id="CP000727">
    <property type="protein sequence ID" value="ABS37966.1"/>
    <property type="molecule type" value="Genomic_DNA"/>
</dbReference>
<dbReference type="EMBL" id="AM412317">
    <property type="protein sequence ID" value="CAL84231.1"/>
    <property type="molecule type" value="Genomic_DNA"/>
</dbReference>
<dbReference type="RefSeq" id="WP_011986966.1">
    <property type="nucleotide sequence ID" value="NC_009698.1"/>
</dbReference>
<dbReference type="RefSeq" id="YP_001255169.1">
    <property type="nucleotide sequence ID" value="NC_009495.1"/>
</dbReference>
<dbReference type="RefSeq" id="YP_001388382.1">
    <property type="nucleotide sequence ID" value="NC_009698.1"/>
</dbReference>
<dbReference type="SMR" id="A5I5A4"/>
<dbReference type="GeneID" id="5186925"/>
<dbReference type="KEGG" id="cbh:CLC_2544"/>
<dbReference type="KEGG" id="cbo:CBO2670"/>
<dbReference type="PATRIC" id="fig|413999.7.peg.2653"/>
<dbReference type="HOGENOM" id="CLU_032784_4_2_9"/>
<dbReference type="UniPathway" id="UPA00068">
    <property type="reaction ID" value="UER00113"/>
</dbReference>
<dbReference type="PRO" id="PR:A5I5A4"/>
<dbReference type="Proteomes" id="UP000001986">
    <property type="component" value="Chromosome"/>
</dbReference>
<dbReference type="GO" id="GO:0005737">
    <property type="term" value="C:cytoplasm"/>
    <property type="evidence" value="ECO:0000318"/>
    <property type="project" value="GO_Central"/>
</dbReference>
<dbReference type="GO" id="GO:0004055">
    <property type="term" value="F:argininosuccinate synthase activity"/>
    <property type="evidence" value="ECO:0000318"/>
    <property type="project" value="GO_Central"/>
</dbReference>
<dbReference type="GO" id="GO:0005524">
    <property type="term" value="F:ATP binding"/>
    <property type="evidence" value="ECO:0007669"/>
    <property type="project" value="UniProtKB-UniRule"/>
</dbReference>
<dbReference type="GO" id="GO:0000053">
    <property type="term" value="P:argininosuccinate metabolic process"/>
    <property type="evidence" value="ECO:0000318"/>
    <property type="project" value="GO_Central"/>
</dbReference>
<dbReference type="GO" id="GO:0006526">
    <property type="term" value="P:L-arginine biosynthetic process"/>
    <property type="evidence" value="ECO:0000318"/>
    <property type="project" value="GO_Central"/>
</dbReference>
<dbReference type="GO" id="GO:0000050">
    <property type="term" value="P:urea cycle"/>
    <property type="evidence" value="ECO:0000318"/>
    <property type="project" value="GO_Central"/>
</dbReference>
<dbReference type="CDD" id="cd01999">
    <property type="entry name" value="ASS"/>
    <property type="match status" value="1"/>
</dbReference>
<dbReference type="FunFam" id="3.40.50.620:FF:000019">
    <property type="entry name" value="Argininosuccinate synthase"/>
    <property type="match status" value="1"/>
</dbReference>
<dbReference type="FunFam" id="3.90.1260.10:FF:000007">
    <property type="entry name" value="Argininosuccinate synthase"/>
    <property type="match status" value="1"/>
</dbReference>
<dbReference type="Gene3D" id="3.90.1260.10">
    <property type="entry name" value="Argininosuccinate synthetase, chain A, domain 2"/>
    <property type="match status" value="1"/>
</dbReference>
<dbReference type="Gene3D" id="3.40.50.620">
    <property type="entry name" value="HUPs"/>
    <property type="match status" value="1"/>
</dbReference>
<dbReference type="Gene3D" id="1.20.5.470">
    <property type="entry name" value="Single helix bin"/>
    <property type="match status" value="1"/>
</dbReference>
<dbReference type="HAMAP" id="MF_00005">
    <property type="entry name" value="Arg_succ_synth_type1"/>
    <property type="match status" value="1"/>
</dbReference>
<dbReference type="InterPro" id="IPR048268">
    <property type="entry name" value="Arginosuc_syn_C"/>
</dbReference>
<dbReference type="InterPro" id="IPR048267">
    <property type="entry name" value="Arginosuc_syn_N"/>
</dbReference>
<dbReference type="InterPro" id="IPR001518">
    <property type="entry name" value="Arginosuc_synth"/>
</dbReference>
<dbReference type="InterPro" id="IPR018223">
    <property type="entry name" value="Arginosuc_synth_CS"/>
</dbReference>
<dbReference type="InterPro" id="IPR023434">
    <property type="entry name" value="Arginosuc_synth_type_1_subfam"/>
</dbReference>
<dbReference type="InterPro" id="IPR024074">
    <property type="entry name" value="AS_cat/multimer_dom_body"/>
</dbReference>
<dbReference type="InterPro" id="IPR014729">
    <property type="entry name" value="Rossmann-like_a/b/a_fold"/>
</dbReference>
<dbReference type="NCBIfam" id="TIGR00032">
    <property type="entry name" value="argG"/>
    <property type="match status" value="1"/>
</dbReference>
<dbReference type="NCBIfam" id="NF001770">
    <property type="entry name" value="PRK00509.1"/>
    <property type="match status" value="1"/>
</dbReference>
<dbReference type="PANTHER" id="PTHR11587">
    <property type="entry name" value="ARGININOSUCCINATE SYNTHASE"/>
    <property type="match status" value="1"/>
</dbReference>
<dbReference type="PANTHER" id="PTHR11587:SF2">
    <property type="entry name" value="ARGININOSUCCINATE SYNTHASE"/>
    <property type="match status" value="1"/>
</dbReference>
<dbReference type="Pfam" id="PF20979">
    <property type="entry name" value="Arginosuc_syn_C"/>
    <property type="match status" value="1"/>
</dbReference>
<dbReference type="Pfam" id="PF00764">
    <property type="entry name" value="Arginosuc_synth"/>
    <property type="match status" value="1"/>
</dbReference>
<dbReference type="SUPFAM" id="SSF52402">
    <property type="entry name" value="Adenine nucleotide alpha hydrolases-like"/>
    <property type="match status" value="1"/>
</dbReference>
<dbReference type="SUPFAM" id="SSF69864">
    <property type="entry name" value="Argininosuccinate synthetase, C-terminal domain"/>
    <property type="match status" value="1"/>
</dbReference>
<dbReference type="PROSITE" id="PS00564">
    <property type="entry name" value="ARGININOSUCCIN_SYN_1"/>
    <property type="match status" value="1"/>
</dbReference>
<dbReference type="PROSITE" id="PS00565">
    <property type="entry name" value="ARGININOSUCCIN_SYN_2"/>
    <property type="match status" value="1"/>
</dbReference>
<accession>A5I5A4</accession>
<accession>A7G6G7</accession>
<comment type="catalytic activity">
    <reaction evidence="1">
        <text>L-citrulline + L-aspartate + ATP = 2-(N(omega)-L-arginino)succinate + AMP + diphosphate + H(+)</text>
        <dbReference type="Rhea" id="RHEA:10932"/>
        <dbReference type="ChEBI" id="CHEBI:15378"/>
        <dbReference type="ChEBI" id="CHEBI:29991"/>
        <dbReference type="ChEBI" id="CHEBI:30616"/>
        <dbReference type="ChEBI" id="CHEBI:33019"/>
        <dbReference type="ChEBI" id="CHEBI:57472"/>
        <dbReference type="ChEBI" id="CHEBI:57743"/>
        <dbReference type="ChEBI" id="CHEBI:456215"/>
        <dbReference type="EC" id="6.3.4.5"/>
    </reaction>
</comment>
<comment type="pathway">
    <text evidence="1">Amino-acid biosynthesis; L-arginine biosynthesis; L-arginine from L-ornithine and carbamoyl phosphate: step 2/3.</text>
</comment>
<comment type="subunit">
    <text evidence="1">Homotetramer.</text>
</comment>
<comment type="subcellular location">
    <subcellularLocation>
        <location evidence="1">Cytoplasm</location>
    </subcellularLocation>
</comment>
<comment type="similarity">
    <text evidence="1">Belongs to the argininosuccinate synthase family. Type 1 subfamily.</text>
</comment>
<protein>
    <recommendedName>
        <fullName evidence="1">Argininosuccinate synthase</fullName>
        <ecNumber evidence="1">6.3.4.5</ecNumber>
    </recommendedName>
    <alternativeName>
        <fullName evidence="1">Citrulline--aspartate ligase</fullName>
    </alternativeName>
</protein>
<reference key="1">
    <citation type="journal article" date="2007" name="Genome Res.">
        <title>Genome sequence of a proteolytic (Group I) Clostridium botulinum strain Hall A and comparative analysis of the clostridial genomes.</title>
        <authorList>
            <person name="Sebaihia M."/>
            <person name="Peck M.W."/>
            <person name="Minton N.P."/>
            <person name="Thomson N.R."/>
            <person name="Holden M.T.G."/>
            <person name="Mitchell W.J."/>
            <person name="Carter A.T."/>
            <person name="Bentley S.D."/>
            <person name="Mason D.R."/>
            <person name="Crossman L."/>
            <person name="Paul C.J."/>
            <person name="Ivens A."/>
            <person name="Wells-Bennik M.H.J."/>
            <person name="Davis I.J."/>
            <person name="Cerdeno-Tarraga A.M."/>
            <person name="Churcher C."/>
            <person name="Quail M.A."/>
            <person name="Chillingworth T."/>
            <person name="Feltwell T."/>
            <person name="Fraser A."/>
            <person name="Goodhead I."/>
            <person name="Hance Z."/>
            <person name="Jagels K."/>
            <person name="Larke N."/>
            <person name="Maddison M."/>
            <person name="Moule S."/>
            <person name="Mungall K."/>
            <person name="Norbertczak H."/>
            <person name="Rabbinowitsch E."/>
            <person name="Sanders M."/>
            <person name="Simmonds M."/>
            <person name="White B."/>
            <person name="Whithead S."/>
            <person name="Parkhill J."/>
        </authorList>
    </citation>
    <scope>NUCLEOTIDE SEQUENCE [LARGE SCALE GENOMIC DNA]</scope>
    <source>
        <strain>Hall / ATCC 3502 / NCTC 13319 / Type A</strain>
    </source>
</reference>
<reference key="2">
    <citation type="journal article" date="2007" name="PLoS ONE">
        <title>Analysis of the neurotoxin complex genes in Clostridium botulinum A1-A4 and B1 strains: BoNT/A3, /Ba4 and /B1 clusters are located within plasmids.</title>
        <authorList>
            <person name="Smith T.J."/>
            <person name="Hill K.K."/>
            <person name="Foley B.T."/>
            <person name="Detter J.C."/>
            <person name="Munk A.C."/>
            <person name="Bruce D.C."/>
            <person name="Doggett N.A."/>
            <person name="Smith L.A."/>
            <person name="Marks J.D."/>
            <person name="Xie G."/>
            <person name="Brettin T.S."/>
        </authorList>
    </citation>
    <scope>NUCLEOTIDE SEQUENCE [LARGE SCALE GENOMIC DNA]</scope>
    <source>
        <strain>Hall / ATCC 3502 / NCTC 13319 / Type A</strain>
    </source>
</reference>
<feature type="chain" id="PRO_0000321307" description="Argininosuccinate synthase">
    <location>
        <begin position="1"/>
        <end position="397"/>
    </location>
</feature>
<feature type="binding site" evidence="1">
    <location>
        <begin position="8"/>
        <end position="16"/>
    </location>
    <ligand>
        <name>ATP</name>
        <dbReference type="ChEBI" id="CHEBI:30616"/>
    </ligand>
</feature>
<feature type="binding site" evidence="1">
    <location>
        <position position="86"/>
    </location>
    <ligand>
        <name>L-citrulline</name>
        <dbReference type="ChEBI" id="CHEBI:57743"/>
    </ligand>
</feature>
<feature type="binding site" evidence="1">
    <location>
        <position position="91"/>
    </location>
    <ligand>
        <name>L-citrulline</name>
        <dbReference type="ChEBI" id="CHEBI:57743"/>
    </ligand>
</feature>
<feature type="binding site" evidence="1">
    <location>
        <position position="116"/>
    </location>
    <ligand>
        <name>ATP</name>
        <dbReference type="ChEBI" id="CHEBI:30616"/>
    </ligand>
</feature>
<feature type="binding site" evidence="1">
    <location>
        <position position="118"/>
    </location>
    <ligand>
        <name>L-aspartate</name>
        <dbReference type="ChEBI" id="CHEBI:29991"/>
    </ligand>
</feature>
<feature type="binding site" evidence="1">
    <location>
        <position position="122"/>
    </location>
    <ligand>
        <name>L-aspartate</name>
        <dbReference type="ChEBI" id="CHEBI:29991"/>
    </ligand>
</feature>
<feature type="binding site" evidence="1">
    <location>
        <position position="122"/>
    </location>
    <ligand>
        <name>L-citrulline</name>
        <dbReference type="ChEBI" id="CHEBI:57743"/>
    </ligand>
</feature>
<feature type="binding site" evidence="1">
    <location>
        <position position="123"/>
    </location>
    <ligand>
        <name>L-aspartate</name>
        <dbReference type="ChEBI" id="CHEBI:29991"/>
    </ligand>
</feature>
<feature type="binding site" evidence="1">
    <location>
        <position position="126"/>
    </location>
    <ligand>
        <name>L-citrulline</name>
        <dbReference type="ChEBI" id="CHEBI:57743"/>
    </ligand>
</feature>
<feature type="binding site" evidence="1">
    <location>
        <position position="175"/>
    </location>
    <ligand>
        <name>L-citrulline</name>
        <dbReference type="ChEBI" id="CHEBI:57743"/>
    </ligand>
</feature>
<feature type="binding site" evidence="1">
    <location>
        <position position="184"/>
    </location>
    <ligand>
        <name>L-citrulline</name>
        <dbReference type="ChEBI" id="CHEBI:57743"/>
    </ligand>
</feature>
<feature type="binding site" evidence="1">
    <location>
        <position position="260"/>
    </location>
    <ligand>
        <name>L-citrulline</name>
        <dbReference type="ChEBI" id="CHEBI:57743"/>
    </ligand>
</feature>
<feature type="binding site" evidence="1">
    <location>
        <position position="272"/>
    </location>
    <ligand>
        <name>L-citrulline</name>
        <dbReference type="ChEBI" id="CHEBI:57743"/>
    </ligand>
</feature>
<name>ASSY_CLOBH</name>
<evidence type="ECO:0000255" key="1">
    <source>
        <dbReference type="HAMAP-Rule" id="MF_00005"/>
    </source>
</evidence>
<organism>
    <name type="scientific">Clostridium botulinum (strain Hall / ATCC 3502 / NCTC 13319 / Type A)</name>
    <dbReference type="NCBI Taxonomy" id="441771"/>
    <lineage>
        <taxon>Bacteria</taxon>
        <taxon>Bacillati</taxon>
        <taxon>Bacillota</taxon>
        <taxon>Clostridia</taxon>
        <taxon>Eubacteriales</taxon>
        <taxon>Clostridiaceae</taxon>
        <taxon>Clostridium</taxon>
    </lineage>
</organism>
<gene>
    <name evidence="1" type="primary">argG</name>
    <name type="ordered locus">CBO2670</name>
    <name type="ordered locus">CLC_2544</name>
</gene>
<keyword id="KW-0028">Amino-acid biosynthesis</keyword>
<keyword id="KW-0055">Arginine biosynthesis</keyword>
<keyword id="KW-0067">ATP-binding</keyword>
<keyword id="KW-0963">Cytoplasm</keyword>
<keyword id="KW-0436">Ligase</keyword>
<keyword id="KW-0547">Nucleotide-binding</keyword>
<keyword id="KW-1185">Reference proteome</keyword>
<proteinExistence type="inferred from homology"/>